<accession>P67461</accession>
<accession>Q99TX1</accession>
<keyword id="KW-0963">Cytoplasm</keyword>
<keyword id="KW-0269">Exonuclease</keyword>
<keyword id="KW-0378">Hydrolase</keyword>
<keyword id="KW-0540">Nuclease</keyword>
<name>EX7S_STAAN</name>
<dbReference type="EC" id="3.1.11.6" evidence="1"/>
<dbReference type="EMBL" id="BA000018">
    <property type="protein sequence ID" value="BAB42615.1"/>
    <property type="molecule type" value="Genomic_DNA"/>
</dbReference>
<dbReference type="PIR" id="B89932">
    <property type="entry name" value="B89932"/>
</dbReference>
<dbReference type="RefSeq" id="WP_000159865.1">
    <property type="nucleotide sequence ID" value="NC_002745.2"/>
</dbReference>
<dbReference type="SMR" id="P67461"/>
<dbReference type="EnsemblBacteria" id="BAB42615">
    <property type="protein sequence ID" value="BAB42615"/>
    <property type="gene ID" value="BAB42615"/>
</dbReference>
<dbReference type="KEGG" id="sau:SA1353"/>
<dbReference type="HOGENOM" id="CLU_145918_3_2_9"/>
<dbReference type="GO" id="GO:0005829">
    <property type="term" value="C:cytosol"/>
    <property type="evidence" value="ECO:0007669"/>
    <property type="project" value="TreeGrafter"/>
</dbReference>
<dbReference type="GO" id="GO:0009318">
    <property type="term" value="C:exodeoxyribonuclease VII complex"/>
    <property type="evidence" value="ECO:0007669"/>
    <property type="project" value="InterPro"/>
</dbReference>
<dbReference type="GO" id="GO:0008855">
    <property type="term" value="F:exodeoxyribonuclease VII activity"/>
    <property type="evidence" value="ECO:0007669"/>
    <property type="project" value="UniProtKB-UniRule"/>
</dbReference>
<dbReference type="GO" id="GO:0006308">
    <property type="term" value="P:DNA catabolic process"/>
    <property type="evidence" value="ECO:0007669"/>
    <property type="project" value="UniProtKB-UniRule"/>
</dbReference>
<dbReference type="FunFam" id="1.10.287.1040:FF:000006">
    <property type="entry name" value="Exodeoxyribonuclease 7 small subunit"/>
    <property type="match status" value="1"/>
</dbReference>
<dbReference type="Gene3D" id="1.10.287.1040">
    <property type="entry name" value="Exonuclease VII, small subunit"/>
    <property type="match status" value="1"/>
</dbReference>
<dbReference type="HAMAP" id="MF_00337">
    <property type="entry name" value="Exonuc_7_S"/>
    <property type="match status" value="1"/>
</dbReference>
<dbReference type="InterPro" id="IPR003761">
    <property type="entry name" value="Exonuc_VII_S"/>
</dbReference>
<dbReference type="InterPro" id="IPR037004">
    <property type="entry name" value="Exonuc_VII_ssu_sf"/>
</dbReference>
<dbReference type="NCBIfam" id="NF002140">
    <property type="entry name" value="PRK00977.1-4"/>
    <property type="match status" value="1"/>
</dbReference>
<dbReference type="NCBIfam" id="NF010671">
    <property type="entry name" value="PRK14068.1"/>
    <property type="match status" value="1"/>
</dbReference>
<dbReference type="NCBIfam" id="TIGR01280">
    <property type="entry name" value="xseB"/>
    <property type="match status" value="1"/>
</dbReference>
<dbReference type="PANTHER" id="PTHR34137">
    <property type="entry name" value="EXODEOXYRIBONUCLEASE 7 SMALL SUBUNIT"/>
    <property type="match status" value="1"/>
</dbReference>
<dbReference type="PANTHER" id="PTHR34137:SF1">
    <property type="entry name" value="EXODEOXYRIBONUCLEASE 7 SMALL SUBUNIT"/>
    <property type="match status" value="1"/>
</dbReference>
<dbReference type="Pfam" id="PF02609">
    <property type="entry name" value="Exonuc_VII_S"/>
    <property type="match status" value="1"/>
</dbReference>
<dbReference type="PIRSF" id="PIRSF006488">
    <property type="entry name" value="Exonuc_VII_S"/>
    <property type="match status" value="1"/>
</dbReference>
<dbReference type="SUPFAM" id="SSF116842">
    <property type="entry name" value="XseB-like"/>
    <property type="match status" value="1"/>
</dbReference>
<protein>
    <recommendedName>
        <fullName evidence="1">Exodeoxyribonuclease 7 small subunit</fullName>
        <ecNumber evidence="1">3.1.11.6</ecNumber>
    </recommendedName>
    <alternativeName>
        <fullName evidence="1">Exodeoxyribonuclease VII small subunit</fullName>
        <shortName evidence="1">Exonuclease VII small subunit</shortName>
    </alternativeName>
</protein>
<sequence>MTKETQSFEEMMQELEQIVQKLDNETVSLEESLDLYQRGMKLSAACDTTLKNAEKKVNDLIKEEAEDVKNDESTDE</sequence>
<organism>
    <name type="scientific">Staphylococcus aureus (strain N315)</name>
    <dbReference type="NCBI Taxonomy" id="158879"/>
    <lineage>
        <taxon>Bacteria</taxon>
        <taxon>Bacillati</taxon>
        <taxon>Bacillota</taxon>
        <taxon>Bacilli</taxon>
        <taxon>Bacillales</taxon>
        <taxon>Staphylococcaceae</taxon>
        <taxon>Staphylococcus</taxon>
    </lineage>
</organism>
<comment type="function">
    <text evidence="1">Bidirectionally degrades single-stranded DNA into large acid-insoluble oligonucleotides, which are then degraded further into small acid-soluble oligonucleotides.</text>
</comment>
<comment type="catalytic activity">
    <reaction evidence="1">
        <text>Exonucleolytic cleavage in either 5'- to 3'- or 3'- to 5'-direction to yield nucleoside 5'-phosphates.</text>
        <dbReference type="EC" id="3.1.11.6"/>
    </reaction>
</comment>
<comment type="subunit">
    <text evidence="1">Heterooligomer composed of large and small subunits.</text>
</comment>
<comment type="subcellular location">
    <subcellularLocation>
        <location evidence="1">Cytoplasm</location>
    </subcellularLocation>
</comment>
<comment type="similarity">
    <text evidence="1">Belongs to the XseB family.</text>
</comment>
<evidence type="ECO:0000255" key="1">
    <source>
        <dbReference type="HAMAP-Rule" id="MF_00337"/>
    </source>
</evidence>
<reference key="1">
    <citation type="journal article" date="2001" name="Lancet">
        <title>Whole genome sequencing of meticillin-resistant Staphylococcus aureus.</title>
        <authorList>
            <person name="Kuroda M."/>
            <person name="Ohta T."/>
            <person name="Uchiyama I."/>
            <person name="Baba T."/>
            <person name="Yuzawa H."/>
            <person name="Kobayashi I."/>
            <person name="Cui L."/>
            <person name="Oguchi A."/>
            <person name="Aoki K."/>
            <person name="Nagai Y."/>
            <person name="Lian J.-Q."/>
            <person name="Ito T."/>
            <person name="Kanamori M."/>
            <person name="Matsumaru H."/>
            <person name="Maruyama A."/>
            <person name="Murakami H."/>
            <person name="Hosoyama A."/>
            <person name="Mizutani-Ui Y."/>
            <person name="Takahashi N.K."/>
            <person name="Sawano T."/>
            <person name="Inoue R."/>
            <person name="Kaito C."/>
            <person name="Sekimizu K."/>
            <person name="Hirakawa H."/>
            <person name="Kuhara S."/>
            <person name="Goto S."/>
            <person name="Yabuzaki J."/>
            <person name="Kanehisa M."/>
            <person name="Yamashita A."/>
            <person name="Oshima K."/>
            <person name="Furuya K."/>
            <person name="Yoshino C."/>
            <person name="Shiba T."/>
            <person name="Hattori M."/>
            <person name="Ogasawara N."/>
            <person name="Hayashi H."/>
            <person name="Hiramatsu K."/>
        </authorList>
    </citation>
    <scope>NUCLEOTIDE SEQUENCE [LARGE SCALE GENOMIC DNA]</scope>
    <source>
        <strain>N315</strain>
    </source>
</reference>
<gene>
    <name evidence="1" type="primary">xseB</name>
    <name type="ordered locus">SA1353</name>
</gene>
<proteinExistence type="inferred from homology"/>
<feature type="chain" id="PRO_0000207005" description="Exodeoxyribonuclease 7 small subunit">
    <location>
        <begin position="1"/>
        <end position="76"/>
    </location>
</feature>